<reference key="1">
    <citation type="journal article" date="1999" name="Nature">
        <title>Sequence and analysis of chromosome 2 of the plant Arabidopsis thaliana.</title>
        <authorList>
            <person name="Lin X."/>
            <person name="Kaul S."/>
            <person name="Rounsley S.D."/>
            <person name="Shea T.P."/>
            <person name="Benito M.-I."/>
            <person name="Town C.D."/>
            <person name="Fujii C.Y."/>
            <person name="Mason T.M."/>
            <person name="Bowman C.L."/>
            <person name="Barnstead M.E."/>
            <person name="Feldblyum T.V."/>
            <person name="Buell C.R."/>
            <person name="Ketchum K.A."/>
            <person name="Lee J.J."/>
            <person name="Ronning C.M."/>
            <person name="Koo H.L."/>
            <person name="Moffat K.S."/>
            <person name="Cronin L.A."/>
            <person name="Shen M."/>
            <person name="Pai G."/>
            <person name="Van Aken S."/>
            <person name="Umayam L."/>
            <person name="Tallon L.J."/>
            <person name="Gill J.E."/>
            <person name="Adams M.D."/>
            <person name="Carrera A.J."/>
            <person name="Creasy T.H."/>
            <person name="Goodman H.M."/>
            <person name="Somerville C.R."/>
            <person name="Copenhaver G.P."/>
            <person name="Preuss D."/>
            <person name="Nierman W.C."/>
            <person name="White O."/>
            <person name="Eisen J.A."/>
            <person name="Salzberg S.L."/>
            <person name="Fraser C.M."/>
            <person name="Venter J.C."/>
        </authorList>
    </citation>
    <scope>NUCLEOTIDE SEQUENCE [LARGE SCALE GENOMIC DNA]</scope>
    <source>
        <strain>cv. Columbia</strain>
    </source>
</reference>
<reference key="2">
    <citation type="journal article" date="2017" name="Plant J.">
        <title>Araport11: a complete reannotation of the Arabidopsis thaliana reference genome.</title>
        <authorList>
            <person name="Cheng C.Y."/>
            <person name="Krishnakumar V."/>
            <person name="Chan A.P."/>
            <person name="Thibaud-Nissen F."/>
            <person name="Schobel S."/>
            <person name="Town C.D."/>
        </authorList>
    </citation>
    <scope>GENOME REANNOTATION</scope>
    <source>
        <strain>cv. Columbia</strain>
    </source>
</reference>
<reference key="3">
    <citation type="journal article" date="2002" name="Plant Physiol.">
        <title>Cloning and sequencing of cDNAs for hypothetical genes from chromosome 2 of Arabidopsis.</title>
        <authorList>
            <person name="Xiao Y.-L."/>
            <person name="Malik M."/>
            <person name="Whitelaw C.A."/>
            <person name="Town C.D."/>
        </authorList>
    </citation>
    <scope>NUCLEOTIDE SEQUENCE [LARGE SCALE MRNA] (ISOFORMS 1 AND 3)</scope>
</reference>
<reference key="4">
    <citation type="journal article" date="2002" name="Science">
        <title>Functional annotation of a full-length Arabidopsis cDNA collection.</title>
        <authorList>
            <person name="Seki M."/>
            <person name="Narusaka M."/>
            <person name="Kamiya A."/>
            <person name="Ishida J."/>
            <person name="Satou M."/>
            <person name="Sakurai T."/>
            <person name="Nakajima M."/>
            <person name="Enju A."/>
            <person name="Akiyama K."/>
            <person name="Oono Y."/>
            <person name="Muramatsu M."/>
            <person name="Hayashizaki Y."/>
            <person name="Kawai J."/>
            <person name="Carninci P."/>
            <person name="Itoh M."/>
            <person name="Ishii Y."/>
            <person name="Arakawa T."/>
            <person name="Shibata K."/>
            <person name="Shinagawa A."/>
            <person name="Shinozaki K."/>
        </authorList>
    </citation>
    <scope>NUCLEOTIDE SEQUENCE [LARGE SCALE MRNA] (ISOFORM 4)</scope>
    <source>
        <strain>cv. Columbia</strain>
    </source>
</reference>
<reference key="5">
    <citation type="journal article" date="2003" name="Science">
        <title>Empirical analysis of transcriptional activity in the Arabidopsis genome.</title>
        <authorList>
            <person name="Yamada K."/>
            <person name="Lim J."/>
            <person name="Dale J.M."/>
            <person name="Chen H."/>
            <person name="Shinn P."/>
            <person name="Palm C.J."/>
            <person name="Southwick A.M."/>
            <person name="Wu H.C."/>
            <person name="Kim C.J."/>
            <person name="Nguyen M."/>
            <person name="Pham P.K."/>
            <person name="Cheuk R.F."/>
            <person name="Karlin-Newmann G."/>
            <person name="Liu S.X."/>
            <person name="Lam B."/>
            <person name="Sakano H."/>
            <person name="Wu T."/>
            <person name="Yu G."/>
            <person name="Miranda M."/>
            <person name="Quach H.L."/>
            <person name="Tripp M."/>
            <person name="Chang C.H."/>
            <person name="Lee J.M."/>
            <person name="Toriumi M.J."/>
            <person name="Chan M.M."/>
            <person name="Tang C.C."/>
            <person name="Onodera C.S."/>
            <person name="Deng J.M."/>
            <person name="Akiyama K."/>
            <person name="Ansari Y."/>
            <person name="Arakawa T."/>
            <person name="Banh J."/>
            <person name="Banno F."/>
            <person name="Bowser L."/>
            <person name="Brooks S.Y."/>
            <person name="Carninci P."/>
            <person name="Chao Q."/>
            <person name="Choy N."/>
            <person name="Enju A."/>
            <person name="Goldsmith A.D."/>
            <person name="Gurjal M."/>
            <person name="Hansen N.F."/>
            <person name="Hayashizaki Y."/>
            <person name="Johnson-Hopson C."/>
            <person name="Hsuan V.W."/>
            <person name="Iida K."/>
            <person name="Karnes M."/>
            <person name="Khan S."/>
            <person name="Koesema E."/>
            <person name="Ishida J."/>
            <person name="Jiang P.X."/>
            <person name="Jones T."/>
            <person name="Kawai J."/>
            <person name="Kamiya A."/>
            <person name="Meyers C."/>
            <person name="Nakajima M."/>
            <person name="Narusaka M."/>
            <person name="Seki M."/>
            <person name="Sakurai T."/>
            <person name="Satou M."/>
            <person name="Tamse R."/>
            <person name="Vaysberg M."/>
            <person name="Wallender E.K."/>
            <person name="Wong C."/>
            <person name="Yamamura Y."/>
            <person name="Yuan S."/>
            <person name="Shinozaki K."/>
            <person name="Davis R.W."/>
            <person name="Theologis A."/>
            <person name="Ecker J.R."/>
        </authorList>
    </citation>
    <scope>NUCLEOTIDE SEQUENCE [LARGE SCALE MRNA] (ISOFORM 4)</scope>
    <source>
        <strain>cv. Columbia</strain>
    </source>
</reference>
<reference key="6">
    <citation type="submission" date="2005-03" db="EMBL/GenBank/DDBJ databases">
        <authorList>
            <person name="Underwood B.A."/>
            <person name="Xiao Y.-L."/>
            <person name="Moskal W.A. Jr."/>
            <person name="Monaghan E.L."/>
            <person name="Wang W."/>
            <person name="Redman J.C."/>
            <person name="Wu H.C."/>
            <person name="Utterback T."/>
            <person name="Town C.D."/>
        </authorList>
    </citation>
    <scope>NUCLEOTIDE SEQUENCE [LARGE SCALE MRNA] (ISOFORM 2)</scope>
    <source>
        <strain>cv. Columbia</strain>
    </source>
</reference>
<reference key="7">
    <citation type="journal article" date="2012" name="Nature">
        <title>Evolution of the chalcone-isomerase fold from fatty-acid binding to stereospecific catalysis.</title>
        <authorList>
            <person name="Ngaki M.N."/>
            <person name="Louie G.V."/>
            <person name="Philippe R.N."/>
            <person name="Manning G."/>
            <person name="Pojer F."/>
            <person name="Bowman M.E."/>
            <person name="Li L."/>
            <person name="Larsen E."/>
            <person name="Wurtele E.S."/>
            <person name="Noel J.P."/>
        </authorList>
    </citation>
    <scope>SUBCELLULAR LOCATION</scope>
    <scope>TISSUE SPECIFICITY</scope>
    <scope>DISRUPTION PHENOTYPE</scope>
</reference>
<gene>
    <name type="primary">FAP2</name>
    <name type="ordered locus">At2g26310</name>
    <name type="ORF">T1D16.5</name>
</gene>
<name>FAP2_ARATH</name>
<evidence type="ECO:0000250" key="1">
    <source>
        <dbReference type="UniProtKB" id="Q9M1X2"/>
    </source>
</evidence>
<evidence type="ECO:0000269" key="2">
    <source>
    </source>
</evidence>
<evidence type="ECO:0000303" key="3">
    <source>
    </source>
</evidence>
<evidence type="ECO:0000303" key="4">
    <source>
    </source>
</evidence>
<evidence type="ECO:0000303" key="5">
    <source>
    </source>
</evidence>
<evidence type="ECO:0000303" key="6">
    <source ref="6"/>
</evidence>
<evidence type="ECO:0000305" key="7"/>
<organism>
    <name type="scientific">Arabidopsis thaliana</name>
    <name type="common">Mouse-ear cress</name>
    <dbReference type="NCBI Taxonomy" id="3702"/>
    <lineage>
        <taxon>Eukaryota</taxon>
        <taxon>Viridiplantae</taxon>
        <taxon>Streptophyta</taxon>
        <taxon>Embryophyta</taxon>
        <taxon>Tracheophyta</taxon>
        <taxon>Spermatophyta</taxon>
        <taxon>Magnoliopsida</taxon>
        <taxon>eudicotyledons</taxon>
        <taxon>Gunneridae</taxon>
        <taxon>Pentapetalae</taxon>
        <taxon>rosids</taxon>
        <taxon>malvids</taxon>
        <taxon>Brassicales</taxon>
        <taxon>Brassicaceae</taxon>
        <taxon>Camelineae</taxon>
        <taxon>Arabidopsis</taxon>
    </lineage>
</organism>
<sequence>MSNMDPNSVLPKRSFLQHELFSQLHIPGSLAFEAFSCISKFTGALLCWFSHGNLQKEVSKHQWGLTCKSRDSLKHVFEHRNVSVFPFHYVSKDISPGFFGNISKSTIQHFVNEAERLHSCSLLSLAAAMIPSLNVMSANGLALPLGSNDVKLRENIEHRTCPENTEHRTCQVGCEEYSGLSFQKLDWTRQSVEPRTGIEFPMLLKENASRSNSEVLVATGSRTMKIIRIKSLKVYAFGFYVHPSSVCQKLGRKYASVPASKLDKCDDLYKDLLREDIVMSVRLVVNYNGLKINTVRDVFEKSLRARLVKANPKTDFNCLNDFGSFFRQDIPIPAGTIIDFRRTEDGQLITEIGGNLIGAVRSKDLCRAFFGMYIGDVPVSEQTKEEIGRKVVGIIKRC</sequence>
<feature type="chain" id="PRO_0000422078" description="Fatty-acid-binding protein 2">
    <location>
        <begin position="1"/>
        <end position="398"/>
    </location>
</feature>
<feature type="binding site" evidence="1">
    <location>
        <position position="222"/>
    </location>
    <ligand>
        <name>dodecanoate</name>
        <dbReference type="ChEBI" id="CHEBI:18262"/>
    </ligand>
</feature>
<feature type="binding site" evidence="1">
    <location>
        <position position="235"/>
    </location>
    <ligand>
        <name>dodecanoate</name>
        <dbReference type="ChEBI" id="CHEBI:18262"/>
    </ligand>
</feature>
<feature type="binding site" evidence="1">
    <location>
        <position position="302"/>
    </location>
    <ligand>
        <name>dodecanoate</name>
        <dbReference type="ChEBI" id="CHEBI:18262"/>
    </ligand>
</feature>
<feature type="splice variant" id="VSP_046338" description="In isoform 4." evidence="3 5">
    <location>
        <begin position="1"/>
        <end position="181"/>
    </location>
</feature>
<feature type="splice variant" id="VSP_046339" description="In isoform 3." evidence="4">
    <location>
        <begin position="1"/>
        <end position="128"/>
    </location>
</feature>
<feature type="splice variant" id="VSP_046340" description="In isoform 4." evidence="3 5">
    <original>FQKLD</original>
    <variation>MTREP</variation>
    <location>
        <begin position="182"/>
        <end position="186"/>
    </location>
</feature>
<feature type="splice variant" id="VSP_046341" description="In isoform 2." evidence="6">
    <location>
        <begin position="310"/>
        <end position="334"/>
    </location>
</feature>
<feature type="sequence conflict" description="In Ref. 3; AAO86844." evidence="7" ref="3">
    <original>P</original>
    <variation>A</variation>
    <location>
        <position position="331"/>
    </location>
</feature>
<proteinExistence type="evidence at transcript level"/>
<accession>Q84RK2</accession>
<accession>F4IUI5</accession>
<accession>O64841</accession>
<accession>Q58G09</accession>
<accession>Q84RK3</accession>
<accession>Q8GXU6</accession>
<keyword id="KW-0025">Alternative splicing</keyword>
<keyword id="KW-0150">Chloroplast</keyword>
<keyword id="KW-0934">Plastid</keyword>
<keyword id="KW-1185">Reference proteome</keyword>
<protein>
    <recommendedName>
        <fullName>Fatty-acid-binding protein 2</fullName>
        <shortName>AtFAP2</shortName>
    </recommendedName>
    <alternativeName>
        <fullName>Chalcone-flavanone isomerase family protein 2</fullName>
    </alternativeName>
</protein>
<dbReference type="EMBL" id="AC004484">
    <property type="protein sequence ID" value="AAC14521.1"/>
    <property type="status" value="ALT_SEQ"/>
    <property type="molecule type" value="Genomic_DNA"/>
</dbReference>
<dbReference type="EMBL" id="CP002685">
    <property type="protein sequence ID" value="AEC07821.1"/>
    <property type="molecule type" value="Genomic_DNA"/>
</dbReference>
<dbReference type="EMBL" id="CP002685">
    <property type="protein sequence ID" value="AEC07822.1"/>
    <property type="molecule type" value="Genomic_DNA"/>
</dbReference>
<dbReference type="EMBL" id="CP002685">
    <property type="protein sequence ID" value="ANM62745.1"/>
    <property type="molecule type" value="Genomic_DNA"/>
</dbReference>
<dbReference type="EMBL" id="AY231415">
    <property type="protein sequence ID" value="AAO86843.1"/>
    <property type="molecule type" value="mRNA"/>
</dbReference>
<dbReference type="EMBL" id="AY231416">
    <property type="protein sequence ID" value="AAO86844.1"/>
    <property type="molecule type" value="mRNA"/>
</dbReference>
<dbReference type="EMBL" id="AK118033">
    <property type="protein sequence ID" value="BAC42664.1"/>
    <property type="molecule type" value="mRNA"/>
</dbReference>
<dbReference type="EMBL" id="BT005236">
    <property type="protein sequence ID" value="AAO63300.1"/>
    <property type="molecule type" value="mRNA"/>
</dbReference>
<dbReference type="EMBL" id="AY954800">
    <property type="protein sequence ID" value="AAX55126.1"/>
    <property type="molecule type" value="mRNA"/>
</dbReference>
<dbReference type="PIR" id="H84658">
    <property type="entry name" value="H84658"/>
</dbReference>
<dbReference type="RefSeq" id="NP_001189606.1">
    <molecule id="Q84RK2-2"/>
    <property type="nucleotide sequence ID" value="NM_001202677.1"/>
</dbReference>
<dbReference type="RefSeq" id="NP_001324880.1">
    <molecule id="Q84RK2-1"/>
    <property type="nucleotide sequence ID" value="NM_001336058.1"/>
</dbReference>
<dbReference type="RefSeq" id="NP_180199.3">
    <molecule id="Q84RK2-1"/>
    <property type="nucleotide sequence ID" value="NM_128188.5"/>
</dbReference>
<dbReference type="SMR" id="Q84RK2"/>
<dbReference type="FunCoup" id="Q84RK2">
    <property type="interactions" value="169"/>
</dbReference>
<dbReference type="STRING" id="3702.Q84RK2"/>
<dbReference type="iPTMnet" id="Q84RK2"/>
<dbReference type="PaxDb" id="3702-AT2G26310.1"/>
<dbReference type="ProteomicsDB" id="230853">
    <molecule id="Q84RK2-1"/>
</dbReference>
<dbReference type="EnsemblPlants" id="AT2G26310.1">
    <molecule id="Q84RK2-1"/>
    <property type="protein sequence ID" value="AT2G26310.1"/>
    <property type="gene ID" value="AT2G26310"/>
</dbReference>
<dbReference type="EnsemblPlants" id="AT2G26310.2">
    <molecule id="Q84RK2-2"/>
    <property type="protein sequence ID" value="AT2G26310.2"/>
    <property type="gene ID" value="AT2G26310"/>
</dbReference>
<dbReference type="EnsemblPlants" id="AT2G26310.5">
    <molecule id="Q84RK2-1"/>
    <property type="protein sequence ID" value="AT2G26310.5"/>
    <property type="gene ID" value="AT2G26310"/>
</dbReference>
<dbReference type="GeneID" id="817171"/>
<dbReference type="Gramene" id="AT2G26310.1">
    <molecule id="Q84RK2-1"/>
    <property type="protein sequence ID" value="AT2G26310.1"/>
    <property type="gene ID" value="AT2G26310"/>
</dbReference>
<dbReference type="Gramene" id="AT2G26310.2">
    <molecule id="Q84RK2-2"/>
    <property type="protein sequence ID" value="AT2G26310.2"/>
    <property type="gene ID" value="AT2G26310"/>
</dbReference>
<dbReference type="Gramene" id="AT2G26310.5">
    <molecule id="Q84RK2-1"/>
    <property type="protein sequence ID" value="AT2G26310.5"/>
    <property type="gene ID" value="AT2G26310"/>
</dbReference>
<dbReference type="KEGG" id="ath:AT2G26310"/>
<dbReference type="Araport" id="AT2G26310"/>
<dbReference type="TAIR" id="AT2G26310">
    <property type="gene designation" value="FAP2"/>
</dbReference>
<dbReference type="eggNOG" id="ENOG502QWEB">
    <property type="taxonomic scope" value="Eukaryota"/>
</dbReference>
<dbReference type="HOGENOM" id="CLU_031098_1_0_1"/>
<dbReference type="InParanoid" id="Q84RK2"/>
<dbReference type="OMA" id="NIFAGAN"/>
<dbReference type="OrthoDB" id="18193at2759"/>
<dbReference type="PhylomeDB" id="Q84RK2"/>
<dbReference type="PRO" id="PR:Q84RK2"/>
<dbReference type="Proteomes" id="UP000006548">
    <property type="component" value="Chromosome 2"/>
</dbReference>
<dbReference type="ExpressionAtlas" id="Q84RK2">
    <property type="expression patterns" value="baseline and differential"/>
</dbReference>
<dbReference type="GO" id="GO:0009570">
    <property type="term" value="C:chloroplast stroma"/>
    <property type="evidence" value="ECO:0000314"/>
    <property type="project" value="UniProtKB"/>
</dbReference>
<dbReference type="GO" id="GO:0005504">
    <property type="term" value="F:fatty acid binding"/>
    <property type="evidence" value="ECO:0000314"/>
    <property type="project" value="TAIR"/>
</dbReference>
<dbReference type="GO" id="GO:0016872">
    <property type="term" value="F:intramolecular lyase activity"/>
    <property type="evidence" value="ECO:0007669"/>
    <property type="project" value="InterPro"/>
</dbReference>
<dbReference type="Gene3D" id="1.10.890.20">
    <property type="match status" value="1"/>
</dbReference>
<dbReference type="Gene3D" id="3.50.70.10">
    <property type="match status" value="1"/>
</dbReference>
<dbReference type="InterPro" id="IPR016087">
    <property type="entry name" value="Chalcone_isomerase"/>
</dbReference>
<dbReference type="InterPro" id="IPR016088">
    <property type="entry name" value="Chalcone_isomerase_3-sand"/>
</dbReference>
<dbReference type="InterPro" id="IPR016089">
    <property type="entry name" value="Chalcone_isomerase_bundle_sf"/>
</dbReference>
<dbReference type="InterPro" id="IPR036298">
    <property type="entry name" value="Chalcone_isomerase_sf"/>
</dbReference>
<dbReference type="PANTHER" id="PTHR47284">
    <property type="entry name" value="FATTY-ACID-BINDING PROTEIN 2"/>
    <property type="match status" value="1"/>
</dbReference>
<dbReference type="PANTHER" id="PTHR47284:SF3">
    <property type="entry name" value="FATTY-ACID-BINDING PROTEIN 2"/>
    <property type="match status" value="1"/>
</dbReference>
<dbReference type="Pfam" id="PF16035">
    <property type="entry name" value="Chalcone_2"/>
    <property type="match status" value="1"/>
</dbReference>
<dbReference type="SUPFAM" id="SSF54626">
    <property type="entry name" value="Chalcone isomerase"/>
    <property type="match status" value="1"/>
</dbReference>
<comment type="function">
    <text>Fatty-acid-binding protein. Associates with saturated fatty acid.</text>
</comment>
<comment type="subcellular location">
    <subcellularLocation>
        <location evidence="2">Plastid</location>
        <location evidence="2">Chloroplast stroma</location>
    </subcellularLocation>
</comment>
<comment type="alternative products">
    <event type="alternative splicing"/>
    <isoform>
        <id>Q84RK2-1</id>
        <name>1</name>
        <sequence type="displayed"/>
    </isoform>
    <isoform>
        <id>Q84RK2-2</id>
        <name>2</name>
        <sequence type="described" ref="VSP_046341"/>
    </isoform>
    <isoform>
        <id>Q84RK2-3</id>
        <name>3</name>
        <sequence type="described" ref="VSP_046339"/>
    </isoform>
    <isoform>
        <id>Q84RK2-4</id>
        <name>4</name>
        <sequence type="described" ref="VSP_046338 VSP_046340"/>
    </isoform>
</comment>
<comment type="tissue specificity">
    <text evidence="2">Expressed in developing cotyledons, young seedlings, roots, seeds, embryos, macrospores, preanthesis and tapetum. Restricted to developing and reproductive tissues.</text>
</comment>
<comment type="disruption phenotype">
    <text evidence="2">No visible phenotype during vegetative growth.</text>
</comment>
<comment type="miscellaneous">
    <molecule>Isoform 2</molecule>
    <text evidence="7">Derived from proteomicsdata.</text>
</comment>
<comment type="similarity">
    <text evidence="7">Belongs to the chalcone isomerase family.</text>
</comment>
<comment type="sequence caution" evidence="7">
    <conflict type="erroneous gene model prediction">
        <sequence resource="EMBL-CDS" id="AAC14521"/>
    </conflict>
</comment>